<evidence type="ECO:0000255" key="1">
    <source>
        <dbReference type="HAMAP-Rule" id="MF_00315"/>
    </source>
</evidence>
<keyword id="KW-0414">Isoprene biosynthesis</keyword>
<keyword id="KW-0460">Magnesium</keyword>
<keyword id="KW-0479">Metal-binding</keyword>
<keyword id="KW-1185">Reference proteome</keyword>
<keyword id="KW-0784">Thiamine biosynthesis</keyword>
<keyword id="KW-0786">Thiamine pyrophosphate</keyword>
<keyword id="KW-0808">Transferase</keyword>
<dbReference type="EC" id="2.2.1.7" evidence="1"/>
<dbReference type="EMBL" id="CP000447">
    <property type="protein sequence ID" value="ABI72630.1"/>
    <property type="molecule type" value="Genomic_DNA"/>
</dbReference>
<dbReference type="RefSeq" id="WP_011638239.1">
    <property type="nucleotide sequence ID" value="NC_008345.1"/>
</dbReference>
<dbReference type="SMR" id="Q07ZD4"/>
<dbReference type="STRING" id="318167.Sfri_2790"/>
<dbReference type="KEGG" id="sfr:Sfri_2790"/>
<dbReference type="eggNOG" id="COG1154">
    <property type="taxonomic scope" value="Bacteria"/>
</dbReference>
<dbReference type="HOGENOM" id="CLU_009227_1_4_6"/>
<dbReference type="OrthoDB" id="9803371at2"/>
<dbReference type="UniPathway" id="UPA00064">
    <property type="reaction ID" value="UER00091"/>
</dbReference>
<dbReference type="Proteomes" id="UP000000684">
    <property type="component" value="Chromosome"/>
</dbReference>
<dbReference type="GO" id="GO:0005829">
    <property type="term" value="C:cytosol"/>
    <property type="evidence" value="ECO:0007669"/>
    <property type="project" value="TreeGrafter"/>
</dbReference>
<dbReference type="GO" id="GO:0008661">
    <property type="term" value="F:1-deoxy-D-xylulose-5-phosphate synthase activity"/>
    <property type="evidence" value="ECO:0007669"/>
    <property type="project" value="UniProtKB-UniRule"/>
</dbReference>
<dbReference type="GO" id="GO:0000287">
    <property type="term" value="F:magnesium ion binding"/>
    <property type="evidence" value="ECO:0007669"/>
    <property type="project" value="UniProtKB-UniRule"/>
</dbReference>
<dbReference type="GO" id="GO:0030976">
    <property type="term" value="F:thiamine pyrophosphate binding"/>
    <property type="evidence" value="ECO:0007669"/>
    <property type="project" value="UniProtKB-UniRule"/>
</dbReference>
<dbReference type="GO" id="GO:0052865">
    <property type="term" value="P:1-deoxy-D-xylulose 5-phosphate biosynthetic process"/>
    <property type="evidence" value="ECO:0007669"/>
    <property type="project" value="UniProtKB-UniPathway"/>
</dbReference>
<dbReference type="GO" id="GO:0019288">
    <property type="term" value="P:isopentenyl diphosphate biosynthetic process, methylerythritol 4-phosphate pathway"/>
    <property type="evidence" value="ECO:0007669"/>
    <property type="project" value="TreeGrafter"/>
</dbReference>
<dbReference type="GO" id="GO:0016114">
    <property type="term" value="P:terpenoid biosynthetic process"/>
    <property type="evidence" value="ECO:0007669"/>
    <property type="project" value="UniProtKB-UniRule"/>
</dbReference>
<dbReference type="GO" id="GO:0009228">
    <property type="term" value="P:thiamine biosynthetic process"/>
    <property type="evidence" value="ECO:0007669"/>
    <property type="project" value="UniProtKB-UniRule"/>
</dbReference>
<dbReference type="CDD" id="cd02007">
    <property type="entry name" value="TPP_DXS"/>
    <property type="match status" value="1"/>
</dbReference>
<dbReference type="CDD" id="cd07033">
    <property type="entry name" value="TPP_PYR_DXS_TK_like"/>
    <property type="match status" value="1"/>
</dbReference>
<dbReference type="FunFam" id="3.40.50.920:FF:000002">
    <property type="entry name" value="1-deoxy-D-xylulose-5-phosphate synthase"/>
    <property type="match status" value="1"/>
</dbReference>
<dbReference type="FunFam" id="3.40.50.970:FF:000005">
    <property type="entry name" value="1-deoxy-D-xylulose-5-phosphate synthase"/>
    <property type="match status" value="1"/>
</dbReference>
<dbReference type="Gene3D" id="3.40.50.920">
    <property type="match status" value="1"/>
</dbReference>
<dbReference type="Gene3D" id="3.40.50.970">
    <property type="match status" value="2"/>
</dbReference>
<dbReference type="HAMAP" id="MF_00315">
    <property type="entry name" value="DXP_synth"/>
    <property type="match status" value="1"/>
</dbReference>
<dbReference type="InterPro" id="IPR005477">
    <property type="entry name" value="Dxylulose-5-P_synthase"/>
</dbReference>
<dbReference type="InterPro" id="IPR029061">
    <property type="entry name" value="THDP-binding"/>
</dbReference>
<dbReference type="InterPro" id="IPR009014">
    <property type="entry name" value="Transketo_C/PFOR_II"/>
</dbReference>
<dbReference type="InterPro" id="IPR005475">
    <property type="entry name" value="Transketolase-like_Pyr-bd"/>
</dbReference>
<dbReference type="InterPro" id="IPR020826">
    <property type="entry name" value="Transketolase_BS"/>
</dbReference>
<dbReference type="InterPro" id="IPR033248">
    <property type="entry name" value="Transketolase_C"/>
</dbReference>
<dbReference type="InterPro" id="IPR049557">
    <property type="entry name" value="Transketolase_CS"/>
</dbReference>
<dbReference type="NCBIfam" id="TIGR00204">
    <property type="entry name" value="dxs"/>
    <property type="match status" value="1"/>
</dbReference>
<dbReference type="NCBIfam" id="NF003933">
    <property type="entry name" value="PRK05444.2-2"/>
    <property type="match status" value="1"/>
</dbReference>
<dbReference type="PANTHER" id="PTHR43322">
    <property type="entry name" value="1-D-DEOXYXYLULOSE 5-PHOSPHATE SYNTHASE-RELATED"/>
    <property type="match status" value="1"/>
</dbReference>
<dbReference type="PANTHER" id="PTHR43322:SF5">
    <property type="entry name" value="1-DEOXY-D-XYLULOSE-5-PHOSPHATE SYNTHASE, CHLOROPLASTIC"/>
    <property type="match status" value="1"/>
</dbReference>
<dbReference type="Pfam" id="PF13292">
    <property type="entry name" value="DXP_synthase_N"/>
    <property type="match status" value="1"/>
</dbReference>
<dbReference type="Pfam" id="PF02779">
    <property type="entry name" value="Transket_pyr"/>
    <property type="match status" value="1"/>
</dbReference>
<dbReference type="Pfam" id="PF02780">
    <property type="entry name" value="Transketolase_C"/>
    <property type="match status" value="1"/>
</dbReference>
<dbReference type="SMART" id="SM00861">
    <property type="entry name" value="Transket_pyr"/>
    <property type="match status" value="1"/>
</dbReference>
<dbReference type="SUPFAM" id="SSF52518">
    <property type="entry name" value="Thiamin diphosphate-binding fold (THDP-binding)"/>
    <property type="match status" value="2"/>
</dbReference>
<dbReference type="SUPFAM" id="SSF52922">
    <property type="entry name" value="TK C-terminal domain-like"/>
    <property type="match status" value="1"/>
</dbReference>
<dbReference type="PROSITE" id="PS00801">
    <property type="entry name" value="TRANSKETOLASE_1"/>
    <property type="match status" value="1"/>
</dbReference>
<dbReference type="PROSITE" id="PS00802">
    <property type="entry name" value="TRANSKETOLASE_2"/>
    <property type="match status" value="1"/>
</dbReference>
<organism>
    <name type="scientific">Shewanella frigidimarina (strain NCIMB 400)</name>
    <dbReference type="NCBI Taxonomy" id="318167"/>
    <lineage>
        <taxon>Bacteria</taxon>
        <taxon>Pseudomonadati</taxon>
        <taxon>Pseudomonadota</taxon>
        <taxon>Gammaproteobacteria</taxon>
        <taxon>Alteromonadales</taxon>
        <taxon>Shewanellaceae</taxon>
        <taxon>Shewanella</taxon>
    </lineage>
</organism>
<feature type="chain" id="PRO_1000019076" description="1-deoxy-D-xylulose-5-phosphate synthase">
    <location>
        <begin position="1"/>
        <end position="621"/>
    </location>
</feature>
<feature type="binding site" evidence="1">
    <location>
        <position position="80"/>
    </location>
    <ligand>
        <name>thiamine diphosphate</name>
        <dbReference type="ChEBI" id="CHEBI:58937"/>
    </ligand>
</feature>
<feature type="binding site" evidence="1">
    <location>
        <begin position="121"/>
        <end position="123"/>
    </location>
    <ligand>
        <name>thiamine diphosphate</name>
        <dbReference type="ChEBI" id="CHEBI:58937"/>
    </ligand>
</feature>
<feature type="binding site" evidence="1">
    <location>
        <position position="152"/>
    </location>
    <ligand>
        <name>Mg(2+)</name>
        <dbReference type="ChEBI" id="CHEBI:18420"/>
    </ligand>
</feature>
<feature type="binding site" evidence="1">
    <location>
        <begin position="153"/>
        <end position="154"/>
    </location>
    <ligand>
        <name>thiamine diphosphate</name>
        <dbReference type="ChEBI" id="CHEBI:58937"/>
    </ligand>
</feature>
<feature type="binding site" evidence="1">
    <location>
        <position position="181"/>
    </location>
    <ligand>
        <name>Mg(2+)</name>
        <dbReference type="ChEBI" id="CHEBI:18420"/>
    </ligand>
</feature>
<feature type="binding site" evidence="1">
    <location>
        <position position="181"/>
    </location>
    <ligand>
        <name>thiamine diphosphate</name>
        <dbReference type="ChEBI" id="CHEBI:58937"/>
    </ligand>
</feature>
<feature type="binding site" evidence="1">
    <location>
        <position position="288"/>
    </location>
    <ligand>
        <name>thiamine diphosphate</name>
        <dbReference type="ChEBI" id="CHEBI:58937"/>
    </ligand>
</feature>
<feature type="binding site" evidence="1">
    <location>
        <position position="370"/>
    </location>
    <ligand>
        <name>thiamine diphosphate</name>
        <dbReference type="ChEBI" id="CHEBI:58937"/>
    </ligand>
</feature>
<sequence length="621" mass="67872">MSFDISKFPVLAKANTPEELRKLPQGLLPQVSDELRQFLLQSVAISSGHFASGLGTVELTVALHYVYNTPFDQLVWDVGHQAYPHKILTDRREQMHTIRQKNGLHPFPWREESPYDTFSVGHSGTSVSAALGMAIAAGKEGVGRKVVAVIGDGAMTGGMVFEALNHAGDLHNDMLVVLNDNEMSISENVGALNNHLAQLMSGRFYTTIRENSKKVLKGMPVIKEMAKRTEEHLKGMVVPATLFEELGFNYIGPIDGHDVDSLVETMRNMRNLKGPQILHIMTKKGRGYEPAEKDPIGWHAVPKFDPSQFKKPTTKPGLPTFSQVFGKWLCDMAATDDKLVAITPAMREGSGMVEFSQRFPSQYFDAAIAEQHAVTLAAGFACAGLKPVVAIYSTFLQRGYDQLIHDVALQRLPVLFAIDRGGIVGADGPTHQGAFDLSFMRCIPNMIIMAPSDENECRQMLYTGYCYQDGPTAVRYPRGFATGAEQIDTMTMIPIGKGVLTRQGQKIAIVNFGTTLEAATDAAEKLDATIADMRFVKPLDLGLLEQLANSHDVIVTVEENAIMGGAGSGVIEALHKMRIVKPVLQIGLPDEFIKHGAPDEITAELQLDAQGILAQIQAFMA</sequence>
<proteinExistence type="inferred from homology"/>
<protein>
    <recommendedName>
        <fullName evidence="1">1-deoxy-D-xylulose-5-phosphate synthase</fullName>
        <ecNumber evidence="1">2.2.1.7</ecNumber>
    </recommendedName>
    <alternativeName>
        <fullName evidence="1">1-deoxyxylulose-5-phosphate synthase</fullName>
        <shortName evidence="1">DXP synthase</shortName>
        <shortName evidence="1">DXPS</shortName>
    </alternativeName>
</protein>
<accession>Q07ZD4</accession>
<name>DXS_SHEFN</name>
<reference key="1">
    <citation type="submission" date="2006-08" db="EMBL/GenBank/DDBJ databases">
        <title>Complete sequence of Shewanella frigidimarina NCIMB 400.</title>
        <authorList>
            <consortium name="US DOE Joint Genome Institute"/>
            <person name="Copeland A."/>
            <person name="Lucas S."/>
            <person name="Lapidus A."/>
            <person name="Barry K."/>
            <person name="Detter J.C."/>
            <person name="Glavina del Rio T."/>
            <person name="Hammon N."/>
            <person name="Israni S."/>
            <person name="Dalin E."/>
            <person name="Tice H."/>
            <person name="Pitluck S."/>
            <person name="Fredrickson J.K."/>
            <person name="Kolker E."/>
            <person name="McCuel L.A."/>
            <person name="DiChristina T."/>
            <person name="Nealson K.H."/>
            <person name="Newman D."/>
            <person name="Tiedje J.M."/>
            <person name="Zhou J."/>
            <person name="Romine M.F."/>
            <person name="Culley D.E."/>
            <person name="Serres M."/>
            <person name="Chertkov O."/>
            <person name="Brettin T."/>
            <person name="Bruce D."/>
            <person name="Han C."/>
            <person name="Tapia R."/>
            <person name="Gilna P."/>
            <person name="Schmutz J."/>
            <person name="Larimer F."/>
            <person name="Land M."/>
            <person name="Hauser L."/>
            <person name="Kyrpides N."/>
            <person name="Mikhailova N."/>
            <person name="Richardson P."/>
        </authorList>
    </citation>
    <scope>NUCLEOTIDE SEQUENCE [LARGE SCALE GENOMIC DNA]</scope>
    <source>
        <strain>NCIMB 400</strain>
    </source>
</reference>
<gene>
    <name evidence="1" type="primary">dxs</name>
    <name type="ordered locus">Sfri_2790</name>
</gene>
<comment type="function">
    <text evidence="1">Catalyzes the acyloin condensation reaction between C atoms 2 and 3 of pyruvate and glyceraldehyde 3-phosphate to yield 1-deoxy-D-xylulose-5-phosphate (DXP).</text>
</comment>
<comment type="catalytic activity">
    <reaction evidence="1">
        <text>D-glyceraldehyde 3-phosphate + pyruvate + H(+) = 1-deoxy-D-xylulose 5-phosphate + CO2</text>
        <dbReference type="Rhea" id="RHEA:12605"/>
        <dbReference type="ChEBI" id="CHEBI:15361"/>
        <dbReference type="ChEBI" id="CHEBI:15378"/>
        <dbReference type="ChEBI" id="CHEBI:16526"/>
        <dbReference type="ChEBI" id="CHEBI:57792"/>
        <dbReference type="ChEBI" id="CHEBI:59776"/>
        <dbReference type="EC" id="2.2.1.7"/>
    </reaction>
</comment>
<comment type="cofactor">
    <cofactor evidence="1">
        <name>Mg(2+)</name>
        <dbReference type="ChEBI" id="CHEBI:18420"/>
    </cofactor>
    <text evidence="1">Binds 1 Mg(2+) ion per subunit.</text>
</comment>
<comment type="cofactor">
    <cofactor evidence="1">
        <name>thiamine diphosphate</name>
        <dbReference type="ChEBI" id="CHEBI:58937"/>
    </cofactor>
    <text evidence="1">Binds 1 thiamine pyrophosphate per subunit.</text>
</comment>
<comment type="pathway">
    <text evidence="1">Metabolic intermediate biosynthesis; 1-deoxy-D-xylulose 5-phosphate biosynthesis; 1-deoxy-D-xylulose 5-phosphate from D-glyceraldehyde 3-phosphate and pyruvate: step 1/1.</text>
</comment>
<comment type="subunit">
    <text evidence="1">Homodimer.</text>
</comment>
<comment type="similarity">
    <text evidence="1">Belongs to the transketolase family. DXPS subfamily.</text>
</comment>